<proteinExistence type="inferred from homology"/>
<keyword id="KW-0238">DNA-binding</keyword>
<keyword id="KW-0479">Metal-binding</keyword>
<keyword id="KW-0539">Nucleus</keyword>
<keyword id="KW-0677">Repeat</keyword>
<keyword id="KW-0862">Zinc</keyword>
<keyword id="KW-0863">Zinc-finger</keyword>
<evidence type="ECO:0000255" key="1">
    <source>
        <dbReference type="PROSITE-ProRule" id="PRU00042"/>
    </source>
</evidence>
<evidence type="ECO:0000305" key="2"/>
<reference key="1">
    <citation type="journal article" date="1992" name="Proc. Natl. Acad. Sci. U.S.A.">
        <title>Evolutionary conservation pattern of zinc-finger domains of Drosophila segmentation genes.</title>
        <authorList>
            <person name="Sommer R.J."/>
            <person name="Retzlaff M."/>
            <person name="Goerlich K."/>
            <person name="Sander K."/>
            <person name="Tautz D."/>
        </authorList>
    </citation>
    <scope>NUCLEOTIDE SEQUENCE [GENOMIC DNA]</scope>
</reference>
<protein>
    <recommendedName>
        <fullName>Escargot/snail protein homolog</fullName>
    </recommendedName>
</protein>
<sequence>HQQFHCPSAEGNQVKKVFSCKNCDKTYVSLGALKMHIRTHTLPCKCPICGKAFSRPWLLQGHIRTHTGEKPFSCQHCQSAFV</sequence>
<name>ESCA_CALVI</name>
<accession>Q01797</accession>
<feature type="chain" id="PRO_0000047042" description="Escargot/snail protein homolog">
    <location>
        <begin position="1" status="less than"/>
        <end position="82" status="greater than"/>
    </location>
</feature>
<feature type="zinc finger region" description="C2H2-type 1" evidence="1">
    <location>
        <begin position="1" status="less than"/>
        <end position="5"/>
    </location>
</feature>
<feature type="zinc finger region" description="C2H2-type 2" evidence="1">
    <location>
        <begin position="18"/>
        <end position="40"/>
    </location>
</feature>
<feature type="zinc finger region" description="C2H2-type 3" evidence="1">
    <location>
        <begin position="44"/>
        <end position="66"/>
    </location>
</feature>
<feature type="zinc finger region" description="C2H2-type 4" evidence="1">
    <location>
        <begin position="72"/>
        <end position="82" status="greater than"/>
    </location>
</feature>
<feature type="non-terminal residue">
    <location>
        <position position="1"/>
    </location>
</feature>
<feature type="non-terminal residue">
    <location>
        <position position="82"/>
    </location>
</feature>
<organism>
    <name type="scientific">Calliphora vicina</name>
    <name type="common">Blue blowfly</name>
    <name type="synonym">Calliphora erythrocephala</name>
    <dbReference type="NCBI Taxonomy" id="7373"/>
    <lineage>
        <taxon>Eukaryota</taxon>
        <taxon>Metazoa</taxon>
        <taxon>Ecdysozoa</taxon>
        <taxon>Arthropoda</taxon>
        <taxon>Hexapoda</taxon>
        <taxon>Insecta</taxon>
        <taxon>Pterygota</taxon>
        <taxon>Neoptera</taxon>
        <taxon>Endopterygota</taxon>
        <taxon>Diptera</taxon>
        <taxon>Brachycera</taxon>
        <taxon>Muscomorpha</taxon>
        <taxon>Oestroidea</taxon>
        <taxon>Calliphoridae</taxon>
        <taxon>Calliphorinae</taxon>
        <taxon>Calliphora</taxon>
    </lineage>
</organism>
<dbReference type="EMBL" id="L01592">
    <property type="protein sequence ID" value="AAA28234.1"/>
    <property type="molecule type" value="Genomic_DNA"/>
</dbReference>
<dbReference type="SMR" id="Q01797"/>
<dbReference type="GO" id="GO:0005634">
    <property type="term" value="C:nucleus"/>
    <property type="evidence" value="ECO:0007669"/>
    <property type="project" value="UniProtKB-SubCell"/>
</dbReference>
<dbReference type="GO" id="GO:0000981">
    <property type="term" value="F:DNA-binding transcription factor activity, RNA polymerase II-specific"/>
    <property type="evidence" value="ECO:0007669"/>
    <property type="project" value="TreeGrafter"/>
</dbReference>
<dbReference type="GO" id="GO:0000978">
    <property type="term" value="F:RNA polymerase II cis-regulatory region sequence-specific DNA binding"/>
    <property type="evidence" value="ECO:0007669"/>
    <property type="project" value="TreeGrafter"/>
</dbReference>
<dbReference type="GO" id="GO:0008270">
    <property type="term" value="F:zinc ion binding"/>
    <property type="evidence" value="ECO:0007669"/>
    <property type="project" value="UniProtKB-KW"/>
</dbReference>
<dbReference type="FunFam" id="3.30.160.60:FF:000043">
    <property type="entry name" value="Scratch family zinc finger 2"/>
    <property type="match status" value="1"/>
</dbReference>
<dbReference type="FunFam" id="3.30.160.60:FF:000860">
    <property type="entry name" value="zinc finger protein SNAI2"/>
    <property type="match status" value="1"/>
</dbReference>
<dbReference type="Gene3D" id="3.30.160.60">
    <property type="entry name" value="Classic Zinc Finger"/>
    <property type="match status" value="3"/>
</dbReference>
<dbReference type="InterPro" id="IPR050527">
    <property type="entry name" value="Snail/Krueppel_Znf"/>
</dbReference>
<dbReference type="InterPro" id="IPR036236">
    <property type="entry name" value="Znf_C2H2_sf"/>
</dbReference>
<dbReference type="InterPro" id="IPR013087">
    <property type="entry name" value="Znf_C2H2_type"/>
</dbReference>
<dbReference type="PANTHER" id="PTHR24388:SF54">
    <property type="entry name" value="PROTEIN ESCARGOT"/>
    <property type="match status" value="1"/>
</dbReference>
<dbReference type="PANTHER" id="PTHR24388">
    <property type="entry name" value="ZINC FINGER PROTEIN"/>
    <property type="match status" value="1"/>
</dbReference>
<dbReference type="Pfam" id="PF00096">
    <property type="entry name" value="zf-C2H2"/>
    <property type="match status" value="2"/>
</dbReference>
<dbReference type="SMART" id="SM00355">
    <property type="entry name" value="ZnF_C2H2"/>
    <property type="match status" value="2"/>
</dbReference>
<dbReference type="SUPFAM" id="SSF57667">
    <property type="entry name" value="beta-beta-alpha zinc fingers"/>
    <property type="match status" value="2"/>
</dbReference>
<dbReference type="PROSITE" id="PS00028">
    <property type="entry name" value="ZINC_FINGER_C2H2_1"/>
    <property type="match status" value="2"/>
</dbReference>
<dbReference type="PROSITE" id="PS50157">
    <property type="entry name" value="ZINC_FINGER_C2H2_2"/>
    <property type="match status" value="2"/>
</dbReference>
<comment type="subcellular location">
    <subcellularLocation>
        <location evidence="2">Nucleus</location>
    </subcellularLocation>
</comment>
<comment type="similarity">
    <text evidence="2">Belongs to the snail C2H2-type zinc-finger protein family.</text>
</comment>